<dbReference type="EC" id="2.5.1.145" evidence="1"/>
<dbReference type="EMBL" id="CP000089">
    <property type="protein sequence ID" value="AAZ45060.1"/>
    <property type="molecule type" value="Genomic_DNA"/>
</dbReference>
<dbReference type="SMR" id="Q47JC1"/>
<dbReference type="STRING" id="159087.Daro_0301"/>
<dbReference type="KEGG" id="dar:Daro_0301"/>
<dbReference type="eggNOG" id="COG0682">
    <property type="taxonomic scope" value="Bacteria"/>
</dbReference>
<dbReference type="HOGENOM" id="CLU_013386_1_0_4"/>
<dbReference type="OrthoDB" id="871140at2"/>
<dbReference type="UniPathway" id="UPA00664"/>
<dbReference type="GO" id="GO:0005886">
    <property type="term" value="C:plasma membrane"/>
    <property type="evidence" value="ECO:0007669"/>
    <property type="project" value="UniProtKB-SubCell"/>
</dbReference>
<dbReference type="GO" id="GO:0008961">
    <property type="term" value="F:phosphatidylglycerol-prolipoprotein diacylglyceryl transferase activity"/>
    <property type="evidence" value="ECO:0007669"/>
    <property type="project" value="UniProtKB-UniRule"/>
</dbReference>
<dbReference type="GO" id="GO:0042158">
    <property type="term" value="P:lipoprotein biosynthetic process"/>
    <property type="evidence" value="ECO:0007669"/>
    <property type="project" value="UniProtKB-UniRule"/>
</dbReference>
<dbReference type="HAMAP" id="MF_01147">
    <property type="entry name" value="Lgt"/>
    <property type="match status" value="1"/>
</dbReference>
<dbReference type="InterPro" id="IPR001640">
    <property type="entry name" value="Lgt"/>
</dbReference>
<dbReference type="NCBIfam" id="TIGR00544">
    <property type="entry name" value="lgt"/>
    <property type="match status" value="1"/>
</dbReference>
<dbReference type="PANTHER" id="PTHR30589:SF0">
    <property type="entry name" value="PHOSPHATIDYLGLYCEROL--PROLIPOPROTEIN DIACYLGLYCERYL TRANSFERASE"/>
    <property type="match status" value="1"/>
</dbReference>
<dbReference type="PANTHER" id="PTHR30589">
    <property type="entry name" value="PROLIPOPROTEIN DIACYLGLYCERYL TRANSFERASE"/>
    <property type="match status" value="1"/>
</dbReference>
<dbReference type="Pfam" id="PF01790">
    <property type="entry name" value="LGT"/>
    <property type="match status" value="1"/>
</dbReference>
<dbReference type="PROSITE" id="PS01311">
    <property type="entry name" value="LGT"/>
    <property type="match status" value="1"/>
</dbReference>
<protein>
    <recommendedName>
        <fullName evidence="1">Phosphatidylglycerol--prolipoprotein diacylglyceryl transferase</fullName>
        <ecNumber evidence="1">2.5.1.145</ecNumber>
    </recommendedName>
</protein>
<name>LGT_DECAR</name>
<feature type="chain" id="PRO_1000053421" description="Phosphatidylglycerol--prolipoprotein diacylglyceryl transferase">
    <location>
        <begin position="1"/>
        <end position="263"/>
    </location>
</feature>
<feature type="transmembrane region" description="Helical" evidence="1">
    <location>
        <begin position="17"/>
        <end position="37"/>
    </location>
</feature>
<feature type="transmembrane region" description="Helical" evidence="1">
    <location>
        <begin position="56"/>
        <end position="76"/>
    </location>
</feature>
<feature type="transmembrane region" description="Helical" evidence="1">
    <location>
        <begin position="88"/>
        <end position="108"/>
    </location>
</feature>
<feature type="transmembrane region" description="Helical" evidence="1">
    <location>
        <begin position="176"/>
        <end position="196"/>
    </location>
</feature>
<feature type="transmembrane region" description="Helical" evidence="1">
    <location>
        <begin position="236"/>
        <end position="256"/>
    </location>
</feature>
<feature type="binding site" evidence="1">
    <location>
        <position position="139"/>
    </location>
    <ligand>
        <name>a 1,2-diacyl-sn-glycero-3-phospho-(1'-sn-glycerol)</name>
        <dbReference type="ChEBI" id="CHEBI:64716"/>
    </ligand>
</feature>
<keyword id="KW-0997">Cell inner membrane</keyword>
<keyword id="KW-1003">Cell membrane</keyword>
<keyword id="KW-0472">Membrane</keyword>
<keyword id="KW-0808">Transferase</keyword>
<keyword id="KW-0812">Transmembrane</keyword>
<keyword id="KW-1133">Transmembrane helix</keyword>
<gene>
    <name evidence="1" type="primary">lgt</name>
    <name type="ordered locus">Daro_0301</name>
</gene>
<proteinExistence type="inferred from homology"/>
<accession>Q47JC1</accession>
<organism>
    <name type="scientific">Dechloromonas aromatica (strain RCB)</name>
    <dbReference type="NCBI Taxonomy" id="159087"/>
    <lineage>
        <taxon>Bacteria</taxon>
        <taxon>Pseudomonadati</taxon>
        <taxon>Pseudomonadota</taxon>
        <taxon>Betaproteobacteria</taxon>
        <taxon>Rhodocyclales</taxon>
        <taxon>Azonexaceae</taxon>
        <taxon>Dechloromonas</taxon>
    </lineage>
</organism>
<evidence type="ECO:0000255" key="1">
    <source>
        <dbReference type="HAMAP-Rule" id="MF_01147"/>
    </source>
</evidence>
<comment type="function">
    <text evidence="1">Catalyzes the transfer of the diacylglyceryl group from phosphatidylglycerol to the sulfhydryl group of the N-terminal cysteine of a prolipoprotein, the first step in the formation of mature lipoproteins.</text>
</comment>
<comment type="catalytic activity">
    <reaction evidence="1">
        <text>L-cysteinyl-[prolipoprotein] + a 1,2-diacyl-sn-glycero-3-phospho-(1'-sn-glycerol) = an S-1,2-diacyl-sn-glyceryl-L-cysteinyl-[prolipoprotein] + sn-glycerol 1-phosphate + H(+)</text>
        <dbReference type="Rhea" id="RHEA:56712"/>
        <dbReference type="Rhea" id="RHEA-COMP:14679"/>
        <dbReference type="Rhea" id="RHEA-COMP:14680"/>
        <dbReference type="ChEBI" id="CHEBI:15378"/>
        <dbReference type="ChEBI" id="CHEBI:29950"/>
        <dbReference type="ChEBI" id="CHEBI:57685"/>
        <dbReference type="ChEBI" id="CHEBI:64716"/>
        <dbReference type="ChEBI" id="CHEBI:140658"/>
        <dbReference type="EC" id="2.5.1.145"/>
    </reaction>
</comment>
<comment type="pathway">
    <text evidence="1">Protein modification; lipoprotein biosynthesis (diacylglyceryl transfer).</text>
</comment>
<comment type="subcellular location">
    <subcellularLocation>
        <location evidence="1">Cell inner membrane</location>
        <topology evidence="1">Multi-pass membrane protein</topology>
    </subcellularLocation>
</comment>
<comment type="similarity">
    <text evidence="1">Belongs to the Lgt family.</text>
</comment>
<reference key="1">
    <citation type="journal article" date="2009" name="BMC Genomics">
        <title>Metabolic analysis of the soil microbe Dechloromonas aromatica str. RCB: indications of a surprisingly complex life-style and cryptic anaerobic pathways for aromatic degradation.</title>
        <authorList>
            <person name="Salinero K.K."/>
            <person name="Keller K."/>
            <person name="Feil W.S."/>
            <person name="Feil H."/>
            <person name="Trong S."/>
            <person name="Di Bartolo G."/>
            <person name="Lapidus A."/>
        </authorList>
    </citation>
    <scope>NUCLEOTIDE SEQUENCE [LARGE SCALE GENOMIC DNA]</scope>
    <source>
        <strain>RCB</strain>
    </source>
</reference>
<sequence length="263" mass="29650">MLLHPQFDPVAFSVGPLSVRWYGLMYLVAFVQFIFLGRYRIKTRPGFLSVEQLDDLLFYGMLGVILGGRLGQVLFYEPAYFLANPLEIFAVWKGGMSFHGGFLGVLVAMGLWTRKHHLNWFEVMDFVAPLVPLGLAAGRVGNFINGELWGRVADASLPWAMIFPQSGDMQPRHPSQLYHVGLEGLALFVILWWFTAKPRPRAAASGAFLIGYGAFRFITEYFREPDHGIFGQSYTISMGQWLSLPMILIGVAMVVFAYRKKSL</sequence>